<feature type="chain" id="PRO_0000362658" description="NADH-quinone oxidoreductase subunit A">
    <location>
        <begin position="1"/>
        <end position="143"/>
    </location>
</feature>
<feature type="transmembrane region" description="Helical" evidence="1">
    <location>
        <begin position="8"/>
        <end position="28"/>
    </location>
</feature>
<feature type="transmembrane region" description="Helical" evidence="1">
    <location>
        <begin position="63"/>
        <end position="83"/>
    </location>
</feature>
<feature type="transmembrane region" description="Helical" evidence="1">
    <location>
        <begin position="90"/>
        <end position="110"/>
    </location>
</feature>
<reference key="1">
    <citation type="submission" date="2006-12" db="EMBL/GenBank/DDBJ databases">
        <title>Complete sequence of Chlorobium phaeobacteroides DSM 266.</title>
        <authorList>
            <consortium name="US DOE Joint Genome Institute"/>
            <person name="Copeland A."/>
            <person name="Lucas S."/>
            <person name="Lapidus A."/>
            <person name="Barry K."/>
            <person name="Detter J.C."/>
            <person name="Glavina del Rio T."/>
            <person name="Hammon N."/>
            <person name="Israni S."/>
            <person name="Pitluck S."/>
            <person name="Goltsman E."/>
            <person name="Schmutz J."/>
            <person name="Larimer F."/>
            <person name="Land M."/>
            <person name="Hauser L."/>
            <person name="Mikhailova N."/>
            <person name="Li T."/>
            <person name="Overmann J."/>
            <person name="Bryant D.A."/>
            <person name="Richardson P."/>
        </authorList>
    </citation>
    <scope>NUCLEOTIDE SEQUENCE [LARGE SCALE GENOMIC DNA]</scope>
    <source>
        <strain>DSM 266 / SMG 266 / 2430</strain>
    </source>
</reference>
<name>NUOA_CHLPD</name>
<dbReference type="EC" id="7.1.1.-" evidence="1"/>
<dbReference type="EMBL" id="CP000492">
    <property type="protein sequence ID" value="ABL65009.1"/>
    <property type="molecule type" value="Genomic_DNA"/>
</dbReference>
<dbReference type="RefSeq" id="WP_011744836.1">
    <property type="nucleotide sequence ID" value="NC_008639.1"/>
</dbReference>
<dbReference type="SMR" id="A1BF32"/>
<dbReference type="STRING" id="290317.Cpha266_0961"/>
<dbReference type="KEGG" id="cph:Cpha266_0961"/>
<dbReference type="eggNOG" id="COG0838">
    <property type="taxonomic scope" value="Bacteria"/>
</dbReference>
<dbReference type="HOGENOM" id="CLU_119549_1_0_10"/>
<dbReference type="OrthoDB" id="9791970at2"/>
<dbReference type="Proteomes" id="UP000008701">
    <property type="component" value="Chromosome"/>
</dbReference>
<dbReference type="GO" id="GO:0030964">
    <property type="term" value="C:NADH dehydrogenase complex"/>
    <property type="evidence" value="ECO:0007669"/>
    <property type="project" value="TreeGrafter"/>
</dbReference>
<dbReference type="GO" id="GO:0005886">
    <property type="term" value="C:plasma membrane"/>
    <property type="evidence" value="ECO:0007669"/>
    <property type="project" value="UniProtKB-SubCell"/>
</dbReference>
<dbReference type="GO" id="GO:0008137">
    <property type="term" value="F:NADH dehydrogenase (ubiquinone) activity"/>
    <property type="evidence" value="ECO:0007669"/>
    <property type="project" value="InterPro"/>
</dbReference>
<dbReference type="GO" id="GO:0050136">
    <property type="term" value="F:NADH:ubiquinone reductase (non-electrogenic) activity"/>
    <property type="evidence" value="ECO:0007669"/>
    <property type="project" value="UniProtKB-UniRule"/>
</dbReference>
<dbReference type="GO" id="GO:0048038">
    <property type="term" value="F:quinone binding"/>
    <property type="evidence" value="ECO:0007669"/>
    <property type="project" value="UniProtKB-KW"/>
</dbReference>
<dbReference type="Gene3D" id="1.20.58.1610">
    <property type="entry name" value="NADH:ubiquinone/plastoquinone oxidoreductase, chain 3"/>
    <property type="match status" value="1"/>
</dbReference>
<dbReference type="HAMAP" id="MF_01394">
    <property type="entry name" value="NDH1_NuoA"/>
    <property type="match status" value="1"/>
</dbReference>
<dbReference type="InterPro" id="IPR023043">
    <property type="entry name" value="NAD(P)H_OxRDtase_bac/plastid"/>
</dbReference>
<dbReference type="InterPro" id="IPR000440">
    <property type="entry name" value="NADH_UbQ/plastoQ_OxRdtase_su3"/>
</dbReference>
<dbReference type="InterPro" id="IPR038430">
    <property type="entry name" value="NDAH_ubi_oxred_su3_sf"/>
</dbReference>
<dbReference type="PANTHER" id="PTHR11058">
    <property type="entry name" value="NADH-UBIQUINONE OXIDOREDUCTASE CHAIN 3"/>
    <property type="match status" value="1"/>
</dbReference>
<dbReference type="PANTHER" id="PTHR11058:SF9">
    <property type="entry name" value="NADH-UBIQUINONE OXIDOREDUCTASE CHAIN 3"/>
    <property type="match status" value="1"/>
</dbReference>
<dbReference type="Pfam" id="PF00507">
    <property type="entry name" value="Oxidored_q4"/>
    <property type="match status" value="1"/>
</dbReference>
<protein>
    <recommendedName>
        <fullName evidence="1">NADH-quinone oxidoreductase subunit A</fullName>
        <ecNumber evidence="1">7.1.1.-</ecNumber>
    </recommendedName>
    <alternativeName>
        <fullName evidence="1">NADH dehydrogenase I subunit A</fullName>
    </alternativeName>
    <alternativeName>
        <fullName evidence="1">NDH-1 subunit A</fullName>
    </alternativeName>
    <alternativeName>
        <fullName evidence="1">NUO1</fullName>
    </alternativeName>
</protein>
<evidence type="ECO:0000255" key="1">
    <source>
        <dbReference type="HAMAP-Rule" id="MF_01394"/>
    </source>
</evidence>
<organism>
    <name type="scientific">Chlorobium phaeobacteroides (strain DSM 266 / SMG 266 / 2430)</name>
    <dbReference type="NCBI Taxonomy" id="290317"/>
    <lineage>
        <taxon>Bacteria</taxon>
        <taxon>Pseudomonadati</taxon>
        <taxon>Chlorobiota</taxon>
        <taxon>Chlorobiia</taxon>
        <taxon>Chlorobiales</taxon>
        <taxon>Chlorobiaceae</taxon>
        <taxon>Chlorobium/Pelodictyon group</taxon>
        <taxon>Chlorobium</taxon>
    </lineage>
</organism>
<proteinExistence type="inferred from homology"/>
<sequence>MDQTLSSFGNVFAFLALGIVFVAGGYLTARMLRPSRPNPAKNSTYECGEEAVGSAWVKFNIRFYVVALIFIIFDVEVVFLYPWATVFKSLGVFALVEVLVFAGILILGLVYAWVKGDLDWVRPEPKVPQMPVMPDRKAEGGRA</sequence>
<accession>A1BF32</accession>
<gene>
    <name evidence="1" type="primary">nuoA</name>
    <name type="ordered locus">Cpha266_0961</name>
</gene>
<comment type="function">
    <text evidence="1">NDH-1 shuttles electrons from NADH, via FMN and iron-sulfur (Fe-S) centers, to quinones in the respiratory chain. The immediate electron acceptor for the enzyme in this species is believed to be a menaquinone. Couples the redox reaction to proton translocation (for every two electrons transferred, four hydrogen ions are translocated across the cytoplasmic membrane), and thus conserves the redox energy in a proton gradient.</text>
</comment>
<comment type="catalytic activity">
    <reaction evidence="1">
        <text>a quinone + NADH + 5 H(+)(in) = a quinol + NAD(+) + 4 H(+)(out)</text>
        <dbReference type="Rhea" id="RHEA:57888"/>
        <dbReference type="ChEBI" id="CHEBI:15378"/>
        <dbReference type="ChEBI" id="CHEBI:24646"/>
        <dbReference type="ChEBI" id="CHEBI:57540"/>
        <dbReference type="ChEBI" id="CHEBI:57945"/>
        <dbReference type="ChEBI" id="CHEBI:132124"/>
    </reaction>
</comment>
<comment type="subunit">
    <text evidence="1">NDH-1 is composed of 14 different subunits. Subunits NuoA, H, J, K, L, M, N constitute the membrane sector of the complex.</text>
</comment>
<comment type="subcellular location">
    <subcellularLocation>
        <location evidence="1">Cell inner membrane</location>
        <topology evidence="1">Multi-pass membrane protein</topology>
    </subcellularLocation>
</comment>
<comment type="similarity">
    <text evidence="1">Belongs to the complex I subunit 3 family.</text>
</comment>
<keyword id="KW-0997">Cell inner membrane</keyword>
<keyword id="KW-1003">Cell membrane</keyword>
<keyword id="KW-0472">Membrane</keyword>
<keyword id="KW-0520">NAD</keyword>
<keyword id="KW-0874">Quinone</keyword>
<keyword id="KW-1185">Reference proteome</keyword>
<keyword id="KW-1278">Translocase</keyword>
<keyword id="KW-0812">Transmembrane</keyword>
<keyword id="KW-1133">Transmembrane helix</keyword>
<keyword id="KW-0813">Transport</keyword>